<keyword id="KW-0030">Aminoacyl-tRNA synthetase</keyword>
<keyword id="KW-0067">ATP-binding</keyword>
<keyword id="KW-0963">Cytoplasm</keyword>
<keyword id="KW-0436">Ligase</keyword>
<keyword id="KW-0547">Nucleotide-binding</keyword>
<keyword id="KW-0648">Protein biosynthesis</keyword>
<keyword id="KW-1185">Reference proteome</keyword>
<comment type="function">
    <text evidence="1">Catalyzes the attachment of proline to tRNA(Pro) in a two-step reaction: proline is first activated by ATP to form Pro-AMP and then transferred to the acceptor end of tRNA(Pro). As ProRS can inadvertently accommodate and process non-cognate amino acids such as alanine and cysteine, to avoid such errors it has two additional distinct editing activities against alanine. One activity is designated as 'pretransfer' editing and involves the tRNA(Pro)-independent hydrolysis of activated Ala-AMP. The other activity is designated 'posttransfer' editing and involves deacylation of mischarged Ala-tRNA(Pro). The misacylated Cys-tRNA(Pro) is not edited by ProRS.</text>
</comment>
<comment type="catalytic activity">
    <reaction evidence="1">
        <text>tRNA(Pro) + L-proline + ATP = L-prolyl-tRNA(Pro) + AMP + diphosphate</text>
        <dbReference type="Rhea" id="RHEA:14305"/>
        <dbReference type="Rhea" id="RHEA-COMP:9700"/>
        <dbReference type="Rhea" id="RHEA-COMP:9702"/>
        <dbReference type="ChEBI" id="CHEBI:30616"/>
        <dbReference type="ChEBI" id="CHEBI:33019"/>
        <dbReference type="ChEBI" id="CHEBI:60039"/>
        <dbReference type="ChEBI" id="CHEBI:78442"/>
        <dbReference type="ChEBI" id="CHEBI:78532"/>
        <dbReference type="ChEBI" id="CHEBI:456215"/>
        <dbReference type="EC" id="6.1.1.15"/>
    </reaction>
</comment>
<comment type="subunit">
    <text evidence="1">Homodimer.</text>
</comment>
<comment type="subcellular location">
    <subcellularLocation>
        <location evidence="1">Cytoplasm</location>
    </subcellularLocation>
</comment>
<comment type="domain">
    <text evidence="1">Consists of three domains: the N-terminal catalytic domain, the editing domain and the C-terminal anticodon-binding domain.</text>
</comment>
<comment type="similarity">
    <text evidence="1">Belongs to the class-II aminoacyl-tRNA synthetase family. ProS type 1 subfamily.</text>
</comment>
<sequence length="572" mass="63430">MKQSKLLMPTLRDIPAEAEVKSHQLLLKAGYIRPIAAGMFSYLPLAKRVLNKIETIIREEMDKIDANEMLVPEVLPAELWQRSGRYETYGPALYKFKNRQDRDFILGPTHEETFTQLIADEIKSYKKLPLTVYQIQAKFRDENRPRFGLLRTREFIMKDAYSFSADQEGLDEAFHNMEEAYTNIFDRLGLEYRAIVGDAGAMGGSDSKEFSAPAAAGEDTIAYSDATDYAANLEMAKDFYERRSATAEQLALEKISTPNEKTIDDVATLLDKPKNELVKTIMFVADDELVAVVTTGDFEVNEVKVQNYLHADSLVMAEEADVRKAVGAGFGSLGPVGLPEEVKLLVDERAADLANFAAGANEDGMHYVNINWNRDVDLLAENVSDFRTVREGDLAIDGKGKLQFTSGIEIGHIFKLGTRYSKTLGAQVLDNNGRQTDVIMGSYGIGVSRLLSAIAEQKADEDGLVWPASVAPFDIHIVPINMKDEDQARVAEQLETLLVAQGMEVLVDDRKERAGVKFADADLIGLPIRITVGKKADEDVVEVKVRASNTNIEMRVSEVVDSVSVLLNASEK</sequence>
<proteinExistence type="inferred from homology"/>
<dbReference type="EC" id="6.1.1.15" evidence="1"/>
<dbReference type="EMBL" id="CP000414">
    <property type="protein sequence ID" value="ABJ61798.1"/>
    <property type="molecule type" value="Genomic_DNA"/>
</dbReference>
<dbReference type="RefSeq" id="WP_011679486.1">
    <property type="nucleotide sequence ID" value="NC_008531.1"/>
</dbReference>
<dbReference type="SMR" id="Q03YC4"/>
<dbReference type="EnsemblBacteria" id="ABJ61798">
    <property type="protein sequence ID" value="ABJ61798"/>
    <property type="gene ID" value="LEUM_0688"/>
</dbReference>
<dbReference type="GeneID" id="29576031"/>
<dbReference type="KEGG" id="lme:LEUM_0688"/>
<dbReference type="eggNOG" id="COG0442">
    <property type="taxonomic scope" value="Bacteria"/>
</dbReference>
<dbReference type="HOGENOM" id="CLU_016739_0_0_9"/>
<dbReference type="Proteomes" id="UP000000362">
    <property type="component" value="Chromosome"/>
</dbReference>
<dbReference type="GO" id="GO:0005829">
    <property type="term" value="C:cytosol"/>
    <property type="evidence" value="ECO:0007669"/>
    <property type="project" value="TreeGrafter"/>
</dbReference>
<dbReference type="GO" id="GO:0002161">
    <property type="term" value="F:aminoacyl-tRNA deacylase activity"/>
    <property type="evidence" value="ECO:0007669"/>
    <property type="project" value="InterPro"/>
</dbReference>
<dbReference type="GO" id="GO:0005524">
    <property type="term" value="F:ATP binding"/>
    <property type="evidence" value="ECO:0007669"/>
    <property type="project" value="UniProtKB-UniRule"/>
</dbReference>
<dbReference type="GO" id="GO:0140096">
    <property type="term" value="F:catalytic activity, acting on a protein"/>
    <property type="evidence" value="ECO:0007669"/>
    <property type="project" value="UniProtKB-ARBA"/>
</dbReference>
<dbReference type="GO" id="GO:0004827">
    <property type="term" value="F:proline-tRNA ligase activity"/>
    <property type="evidence" value="ECO:0007669"/>
    <property type="project" value="UniProtKB-UniRule"/>
</dbReference>
<dbReference type="GO" id="GO:0016740">
    <property type="term" value="F:transferase activity"/>
    <property type="evidence" value="ECO:0007669"/>
    <property type="project" value="UniProtKB-ARBA"/>
</dbReference>
<dbReference type="GO" id="GO:0006433">
    <property type="term" value="P:prolyl-tRNA aminoacylation"/>
    <property type="evidence" value="ECO:0007669"/>
    <property type="project" value="UniProtKB-UniRule"/>
</dbReference>
<dbReference type="CDD" id="cd04334">
    <property type="entry name" value="ProRS-INS"/>
    <property type="match status" value="1"/>
</dbReference>
<dbReference type="CDD" id="cd00861">
    <property type="entry name" value="ProRS_anticodon_short"/>
    <property type="match status" value="1"/>
</dbReference>
<dbReference type="CDD" id="cd00779">
    <property type="entry name" value="ProRS_core_prok"/>
    <property type="match status" value="1"/>
</dbReference>
<dbReference type="FunFam" id="3.30.930.10:FF:000062">
    <property type="entry name" value="Proline--tRNA ligase"/>
    <property type="match status" value="1"/>
</dbReference>
<dbReference type="FunFam" id="3.30.930.10:FF:000066">
    <property type="entry name" value="Proline--tRNA ligase"/>
    <property type="match status" value="1"/>
</dbReference>
<dbReference type="FunFam" id="3.40.50.800:FF:000011">
    <property type="entry name" value="Proline--tRNA ligase"/>
    <property type="match status" value="1"/>
</dbReference>
<dbReference type="Gene3D" id="3.40.50.800">
    <property type="entry name" value="Anticodon-binding domain"/>
    <property type="match status" value="1"/>
</dbReference>
<dbReference type="Gene3D" id="3.30.930.10">
    <property type="entry name" value="Bira Bifunctional Protein, Domain 2"/>
    <property type="match status" value="2"/>
</dbReference>
<dbReference type="HAMAP" id="MF_01569">
    <property type="entry name" value="Pro_tRNA_synth_type1"/>
    <property type="match status" value="1"/>
</dbReference>
<dbReference type="InterPro" id="IPR002314">
    <property type="entry name" value="aa-tRNA-synt_IIb"/>
</dbReference>
<dbReference type="InterPro" id="IPR006195">
    <property type="entry name" value="aa-tRNA-synth_II"/>
</dbReference>
<dbReference type="InterPro" id="IPR045864">
    <property type="entry name" value="aa-tRNA-synth_II/BPL/LPL"/>
</dbReference>
<dbReference type="InterPro" id="IPR004154">
    <property type="entry name" value="Anticodon-bd"/>
</dbReference>
<dbReference type="InterPro" id="IPR036621">
    <property type="entry name" value="Anticodon-bd_dom_sf"/>
</dbReference>
<dbReference type="InterPro" id="IPR002316">
    <property type="entry name" value="Pro-tRNA-ligase_IIa"/>
</dbReference>
<dbReference type="InterPro" id="IPR004500">
    <property type="entry name" value="Pro-tRNA-synth_IIa_bac-type"/>
</dbReference>
<dbReference type="InterPro" id="IPR023717">
    <property type="entry name" value="Pro-tRNA-Synthase_IIa_type1"/>
</dbReference>
<dbReference type="InterPro" id="IPR050062">
    <property type="entry name" value="Pro-tRNA_synthetase"/>
</dbReference>
<dbReference type="InterPro" id="IPR044140">
    <property type="entry name" value="ProRS_anticodon_short"/>
</dbReference>
<dbReference type="InterPro" id="IPR033730">
    <property type="entry name" value="ProRS_core_prok"/>
</dbReference>
<dbReference type="InterPro" id="IPR036754">
    <property type="entry name" value="YbaK/aa-tRNA-synt-asso_dom_sf"/>
</dbReference>
<dbReference type="InterPro" id="IPR007214">
    <property type="entry name" value="YbaK/aa-tRNA-synth-assoc-dom"/>
</dbReference>
<dbReference type="NCBIfam" id="NF006625">
    <property type="entry name" value="PRK09194.1"/>
    <property type="match status" value="1"/>
</dbReference>
<dbReference type="NCBIfam" id="TIGR00409">
    <property type="entry name" value="proS_fam_II"/>
    <property type="match status" value="1"/>
</dbReference>
<dbReference type="PANTHER" id="PTHR42753">
    <property type="entry name" value="MITOCHONDRIAL RIBOSOME PROTEIN L39/PROLYL-TRNA LIGASE FAMILY MEMBER"/>
    <property type="match status" value="1"/>
</dbReference>
<dbReference type="PANTHER" id="PTHR42753:SF2">
    <property type="entry name" value="PROLINE--TRNA LIGASE"/>
    <property type="match status" value="1"/>
</dbReference>
<dbReference type="Pfam" id="PF03129">
    <property type="entry name" value="HGTP_anticodon"/>
    <property type="match status" value="1"/>
</dbReference>
<dbReference type="Pfam" id="PF00587">
    <property type="entry name" value="tRNA-synt_2b"/>
    <property type="match status" value="1"/>
</dbReference>
<dbReference type="Pfam" id="PF04073">
    <property type="entry name" value="tRNA_edit"/>
    <property type="match status" value="1"/>
</dbReference>
<dbReference type="PRINTS" id="PR01046">
    <property type="entry name" value="TRNASYNTHPRO"/>
</dbReference>
<dbReference type="SUPFAM" id="SSF52954">
    <property type="entry name" value="Class II aaRS ABD-related"/>
    <property type="match status" value="1"/>
</dbReference>
<dbReference type="SUPFAM" id="SSF55681">
    <property type="entry name" value="Class II aaRS and biotin synthetases"/>
    <property type="match status" value="1"/>
</dbReference>
<dbReference type="SUPFAM" id="SSF55826">
    <property type="entry name" value="YbaK/ProRS associated domain"/>
    <property type="match status" value="1"/>
</dbReference>
<dbReference type="PROSITE" id="PS50862">
    <property type="entry name" value="AA_TRNA_LIGASE_II"/>
    <property type="match status" value="1"/>
</dbReference>
<evidence type="ECO:0000255" key="1">
    <source>
        <dbReference type="HAMAP-Rule" id="MF_01569"/>
    </source>
</evidence>
<organism>
    <name type="scientific">Leuconostoc mesenteroides subsp. mesenteroides (strain ATCC 8293 / DSM 20343 / BCRC 11652 / CCM 1803 / JCM 6124 / NCDO 523 / NBRC 100496 / NCIMB 8023 / NCTC 12954 / NRRL B-1118 / 37Y)</name>
    <dbReference type="NCBI Taxonomy" id="203120"/>
    <lineage>
        <taxon>Bacteria</taxon>
        <taxon>Bacillati</taxon>
        <taxon>Bacillota</taxon>
        <taxon>Bacilli</taxon>
        <taxon>Lactobacillales</taxon>
        <taxon>Lactobacillaceae</taxon>
        <taxon>Leuconostoc</taxon>
    </lineage>
</organism>
<feature type="chain" id="PRO_0000288343" description="Proline--tRNA ligase">
    <location>
        <begin position="1"/>
        <end position="572"/>
    </location>
</feature>
<gene>
    <name evidence="1" type="primary">proS</name>
    <name type="ordered locus">LEUM_0688</name>
</gene>
<accession>Q03YC4</accession>
<name>SYP_LEUMM</name>
<protein>
    <recommendedName>
        <fullName evidence="1">Proline--tRNA ligase</fullName>
        <ecNumber evidence="1">6.1.1.15</ecNumber>
    </recommendedName>
    <alternativeName>
        <fullName evidence="1">Prolyl-tRNA synthetase</fullName>
        <shortName evidence="1">ProRS</shortName>
    </alternativeName>
</protein>
<reference key="1">
    <citation type="journal article" date="2006" name="Proc. Natl. Acad. Sci. U.S.A.">
        <title>Comparative genomics of the lactic acid bacteria.</title>
        <authorList>
            <person name="Makarova K.S."/>
            <person name="Slesarev A."/>
            <person name="Wolf Y.I."/>
            <person name="Sorokin A."/>
            <person name="Mirkin B."/>
            <person name="Koonin E.V."/>
            <person name="Pavlov A."/>
            <person name="Pavlova N."/>
            <person name="Karamychev V."/>
            <person name="Polouchine N."/>
            <person name="Shakhova V."/>
            <person name="Grigoriev I."/>
            <person name="Lou Y."/>
            <person name="Rohksar D."/>
            <person name="Lucas S."/>
            <person name="Huang K."/>
            <person name="Goodstein D.M."/>
            <person name="Hawkins T."/>
            <person name="Plengvidhya V."/>
            <person name="Welker D."/>
            <person name="Hughes J."/>
            <person name="Goh Y."/>
            <person name="Benson A."/>
            <person name="Baldwin K."/>
            <person name="Lee J.-H."/>
            <person name="Diaz-Muniz I."/>
            <person name="Dosti B."/>
            <person name="Smeianov V."/>
            <person name="Wechter W."/>
            <person name="Barabote R."/>
            <person name="Lorca G."/>
            <person name="Altermann E."/>
            <person name="Barrangou R."/>
            <person name="Ganesan B."/>
            <person name="Xie Y."/>
            <person name="Rawsthorne H."/>
            <person name="Tamir D."/>
            <person name="Parker C."/>
            <person name="Breidt F."/>
            <person name="Broadbent J.R."/>
            <person name="Hutkins R."/>
            <person name="O'Sullivan D."/>
            <person name="Steele J."/>
            <person name="Unlu G."/>
            <person name="Saier M.H. Jr."/>
            <person name="Klaenhammer T."/>
            <person name="Richardson P."/>
            <person name="Kozyavkin S."/>
            <person name="Weimer B.C."/>
            <person name="Mills D.A."/>
        </authorList>
    </citation>
    <scope>NUCLEOTIDE SEQUENCE [LARGE SCALE GENOMIC DNA]</scope>
    <source>
        <strain>ATCC 8293 / DSM 20343 / BCRC 11652 / CCM 1803 / JCM 6124 / NCDO 523 / NBRC 100496 / NCIMB 8023 / NCTC 12954 / NRRL B-1118 / 37Y</strain>
    </source>
</reference>